<evidence type="ECO:0000250" key="1"/>
<evidence type="ECO:0000250" key="2">
    <source>
        <dbReference type="UniProtKB" id="Q91VA0"/>
    </source>
</evidence>
<evidence type="ECO:0000250" key="3">
    <source>
        <dbReference type="UniProtKB" id="Q9BEA2"/>
    </source>
</evidence>
<evidence type="ECO:0000269" key="4">
    <source>
    </source>
</evidence>
<evidence type="ECO:0000303" key="5">
    <source>
    </source>
</evidence>
<evidence type="ECO:0000303" key="6">
    <source>
    </source>
</evidence>
<evidence type="ECO:0000305" key="7"/>
<evidence type="ECO:0000305" key="8">
    <source>
    </source>
</evidence>
<reference key="1">
    <citation type="journal article" date="2001" name="J. Biol. Chem.">
        <title>Molecular identification and characterization of two medium-chain acyl-CoA synthetases, MACS1 and the Sa gene product.</title>
        <authorList>
            <person name="Fujino T."/>
            <person name="Takei Y.A."/>
            <person name="Sone H."/>
            <person name="Ioka R.X."/>
            <person name="Kamataki A."/>
            <person name="Magoori K."/>
            <person name="Takahashi S."/>
            <person name="Sakai J."/>
            <person name="Yamamoto T.T."/>
        </authorList>
    </citation>
    <scope>NUCLEOTIDE SEQUENCE [GENOMIC DNA / MRNA] (ISOFORM 1)</scope>
</reference>
<reference key="2">
    <citation type="journal article" date="2004" name="Genome Res.">
        <title>The status, quality, and expansion of the NIH full-length cDNA project: the Mammalian Gene Collection (MGC).</title>
        <authorList>
            <consortium name="The MGC Project Team"/>
        </authorList>
    </citation>
    <scope>NUCLEOTIDE SEQUENCE [LARGE SCALE MRNA] (ISOFORMS 1 AND 2)</scope>
</reference>
<reference key="3">
    <citation type="journal article" date="1999" name="Biochim. Biophys. Acta">
        <title>Characterization of the CoA ligases of human liver mitochondria catalyzing the activation of short- and medium-chain fatty acids and xenobiotic carboxylic acids.</title>
        <authorList>
            <person name="Vessey D.A."/>
            <person name="Kelley M."/>
            <person name="Warren R.S."/>
        </authorList>
    </citation>
    <scope>FUNCTION</scope>
    <scope>CATALYTIC ACTIVITY</scope>
    <scope>COFACTOR</scope>
    <scope>ACTIVITY REGULATION</scope>
    <scope>BIOPHYSICOCHEMICAL PROPERTIES</scope>
</reference>
<reference key="4">
    <citation type="journal article" date="2014" name="J. Proteomics">
        <title>An enzyme assisted RP-RPLC approach for in-depth analysis of human liver phosphoproteome.</title>
        <authorList>
            <person name="Bian Y."/>
            <person name="Song C."/>
            <person name="Cheng K."/>
            <person name="Dong M."/>
            <person name="Wang F."/>
            <person name="Huang J."/>
            <person name="Sun D."/>
            <person name="Wang L."/>
            <person name="Ye M."/>
            <person name="Zou H."/>
        </authorList>
    </citation>
    <scope>IDENTIFICATION BY MASS SPECTROMETRY [LARGE SCALE ANALYSIS]</scope>
    <source>
        <tissue>Liver</tissue>
    </source>
</reference>
<reference key="5">
    <citation type="journal article" date="2016" name="Expert Opin. Drug Metab. Toxicol.">
        <title>Xenobiotic/medium chain fatty acid: CoA ligase - a critical review on its role in fatty acid metabolism and the detoxification of benzoic acid and aspirin.</title>
        <authorList>
            <person name="van der Sluis R."/>
            <person name="Erasmus E."/>
        </authorList>
    </citation>
    <scope>REVIEW</scope>
</reference>
<sequence>MQWLMRFRTLWGIHKSFHNIHPAPSQLRCRSLSEFGAPRWNDYEVPEEFNFASYVLDYWAQKEKEGKRGPNPAFWWVNGQGDEVKWSFREMGDLTRRVANVFTQTCGLQQGDHLALMLPRVPEWWLVAVGCMRTGIIFIPATILLKAKDILYRLQLSKAKGIVTIDALASEVDSIASQCPSLKTKLLVSDHSREGWLDFRSLVKSASPEHTCVKSKTLDPMVIFFTSGTTGFPKMAKHSHGLALQPSFPGSRKLRSLKTSDVSWCLSDSGWIVATIWTLVEPWTAGCTVFIHHLPQFDTKVIIQTLLKYPINHFWGVSSIYRMILQQDFTSIRFPALEHCYTGGEVVLPKDQEEWKRRTGLLLYENYGQSETGLICATYWGMKIKPGFMGKATPPYDVQVIDDKGSILPPNTEGNIGIRIKPVRPVSLFMCYEGDPEKTAKVECGDFYNTGDRGKMDEEGYICFLGRSDDIINASGYRIGPAEVESALVEHPAVAESAVVGSPDPIRGEVVKAFIVLTPQFLSHDKDQLTKELQQHVKSVTAPYKYPRKVEFVSELPKTITGKIERKELRKKETGQM</sequence>
<dbReference type="EC" id="6.2.1.2" evidence="4"/>
<dbReference type="EC" id="6.2.1.25" evidence="4"/>
<dbReference type="EMBL" id="AB059429">
    <property type="protein sequence ID" value="BAB64535.1"/>
    <property type="molecule type" value="mRNA"/>
</dbReference>
<dbReference type="EMBL" id="AB062503">
    <property type="protein sequence ID" value="BAB68363.1"/>
    <property type="molecule type" value="Genomic_DNA"/>
</dbReference>
<dbReference type="EMBL" id="BC125177">
    <property type="protein sequence ID" value="AAI25178.1"/>
    <property type="molecule type" value="mRNA"/>
</dbReference>
<dbReference type="EMBL" id="BC125178">
    <property type="protein sequence ID" value="AAI25179.1"/>
    <property type="molecule type" value="mRNA"/>
</dbReference>
<dbReference type="CCDS" id="CCDS10587.1">
    <molecule id="Q08AH1-1"/>
</dbReference>
<dbReference type="RefSeq" id="NP_001305819.1">
    <molecule id="Q08AH1-1"/>
    <property type="nucleotide sequence ID" value="NM_001318890.3"/>
</dbReference>
<dbReference type="RefSeq" id="NP_443188.2">
    <molecule id="Q08AH1-1"/>
    <property type="nucleotide sequence ID" value="NM_052956.3"/>
</dbReference>
<dbReference type="SMR" id="Q08AH1"/>
<dbReference type="BioGRID" id="125496">
    <property type="interactions" value="10"/>
</dbReference>
<dbReference type="FunCoup" id="Q08AH1">
    <property type="interactions" value="81"/>
</dbReference>
<dbReference type="IntAct" id="Q08AH1">
    <property type="interactions" value="9"/>
</dbReference>
<dbReference type="STRING" id="9606.ENSP00000301956"/>
<dbReference type="SwissLipids" id="SLP:000000449"/>
<dbReference type="GlyGen" id="Q08AH1">
    <property type="glycosylation" value="1 site, 1 O-linked glycan (1 site)"/>
</dbReference>
<dbReference type="iPTMnet" id="Q08AH1"/>
<dbReference type="PhosphoSitePlus" id="Q08AH1"/>
<dbReference type="BioMuta" id="ACSM1"/>
<dbReference type="DMDM" id="121940002"/>
<dbReference type="MassIVE" id="Q08AH1"/>
<dbReference type="PaxDb" id="9606-ENSP00000301956"/>
<dbReference type="PeptideAtlas" id="Q08AH1"/>
<dbReference type="ProteomicsDB" id="58670">
    <molecule id="Q08AH1-1"/>
</dbReference>
<dbReference type="ProteomicsDB" id="58671">
    <molecule id="Q08AH1-2"/>
</dbReference>
<dbReference type="TopDownProteomics" id="Q08AH1-1">
    <molecule id="Q08AH1-1"/>
</dbReference>
<dbReference type="Antibodypedia" id="49877">
    <property type="antibodies" value="70 antibodies from 17 providers"/>
</dbReference>
<dbReference type="DNASU" id="116285"/>
<dbReference type="Ensembl" id="ENST00000307493.8">
    <molecule id="Q08AH1-1"/>
    <property type="protein sequence ID" value="ENSP00000301956.3"/>
    <property type="gene ID" value="ENSG00000166743.10"/>
</dbReference>
<dbReference type="Ensembl" id="ENST00000519745.5">
    <molecule id="Q08AH1-2"/>
    <property type="protein sequence ID" value="ENSP00000428650.1"/>
    <property type="gene ID" value="ENSG00000166743.10"/>
</dbReference>
<dbReference type="Ensembl" id="ENST00000520010.6">
    <molecule id="Q08AH1-1"/>
    <property type="protein sequence ID" value="ENSP00000428047.1"/>
    <property type="gene ID" value="ENSG00000166743.10"/>
</dbReference>
<dbReference type="GeneID" id="116285"/>
<dbReference type="KEGG" id="hsa:116285"/>
<dbReference type="MANE-Select" id="ENST00000520010.6">
    <property type="protein sequence ID" value="ENSP00000428047.1"/>
    <property type="RefSeq nucleotide sequence ID" value="NM_001318890.3"/>
    <property type="RefSeq protein sequence ID" value="NP_001305819.1"/>
</dbReference>
<dbReference type="UCSC" id="uc002dhm.1">
    <molecule id="Q08AH1-1"/>
    <property type="organism name" value="human"/>
</dbReference>
<dbReference type="AGR" id="HGNC:18049"/>
<dbReference type="CTD" id="116285"/>
<dbReference type="DisGeNET" id="116285"/>
<dbReference type="GeneCards" id="ACSM1"/>
<dbReference type="HGNC" id="HGNC:18049">
    <property type="gene designation" value="ACSM1"/>
</dbReference>
<dbReference type="HPA" id="ENSG00000166743">
    <property type="expression patterns" value="Tissue enriched (breast)"/>
</dbReference>
<dbReference type="MIM" id="614357">
    <property type="type" value="gene"/>
</dbReference>
<dbReference type="neXtProt" id="NX_Q08AH1"/>
<dbReference type="OpenTargets" id="ENSG00000166743"/>
<dbReference type="PharmGKB" id="PA25468"/>
<dbReference type="VEuPathDB" id="HostDB:ENSG00000166743"/>
<dbReference type="eggNOG" id="KOG1175">
    <property type="taxonomic scope" value="Eukaryota"/>
</dbReference>
<dbReference type="GeneTree" id="ENSGT00940000161138"/>
<dbReference type="HOGENOM" id="CLU_000022_59_10_1"/>
<dbReference type="InParanoid" id="Q08AH1"/>
<dbReference type="OMA" id="KTMDPMV"/>
<dbReference type="OrthoDB" id="6614653at2759"/>
<dbReference type="PAN-GO" id="Q08AH1">
    <property type="GO annotations" value="5 GO annotations based on evolutionary models"/>
</dbReference>
<dbReference type="PhylomeDB" id="Q08AH1"/>
<dbReference type="TreeFam" id="TF354287"/>
<dbReference type="BioCyc" id="MetaCyc:HS09445-MONOMER"/>
<dbReference type="PathwayCommons" id="Q08AH1"/>
<dbReference type="Reactome" id="R-HSA-177135">
    <property type="pathway name" value="Conjugation of benzoate with glycine"/>
</dbReference>
<dbReference type="Reactome" id="R-HSA-177162">
    <property type="pathway name" value="Conjugation of phenylacetate with glutamine"/>
</dbReference>
<dbReference type="SignaLink" id="Q08AH1"/>
<dbReference type="BioGRID-ORCS" id="116285">
    <property type="hits" value="15 hits in 1149 CRISPR screens"/>
</dbReference>
<dbReference type="ChiTaRS" id="ACSM1">
    <property type="organism name" value="human"/>
</dbReference>
<dbReference type="GenomeRNAi" id="116285"/>
<dbReference type="Pharos" id="Q08AH1">
    <property type="development level" value="Tbio"/>
</dbReference>
<dbReference type="PRO" id="PR:Q08AH1"/>
<dbReference type="Proteomes" id="UP000005640">
    <property type="component" value="Chromosome 16"/>
</dbReference>
<dbReference type="RNAct" id="Q08AH1">
    <property type="molecule type" value="protein"/>
</dbReference>
<dbReference type="Bgee" id="ENSG00000166743">
    <property type="expression patterns" value="Expressed in left ovary and 95 other cell types or tissues"/>
</dbReference>
<dbReference type="ExpressionAtlas" id="Q08AH1">
    <property type="expression patterns" value="baseline and differential"/>
</dbReference>
<dbReference type="GO" id="GO:0072562">
    <property type="term" value="C:blood microparticle"/>
    <property type="evidence" value="ECO:0007005"/>
    <property type="project" value="UniProtKB"/>
</dbReference>
<dbReference type="GO" id="GO:0070062">
    <property type="term" value="C:extracellular exosome"/>
    <property type="evidence" value="ECO:0007005"/>
    <property type="project" value="UniProtKB"/>
</dbReference>
<dbReference type="GO" id="GO:0005759">
    <property type="term" value="C:mitochondrial matrix"/>
    <property type="evidence" value="ECO:0000314"/>
    <property type="project" value="UniProtKB"/>
</dbReference>
<dbReference type="GO" id="GO:0005739">
    <property type="term" value="C:mitochondrion"/>
    <property type="evidence" value="ECO:0006056"/>
    <property type="project" value="FlyBase"/>
</dbReference>
<dbReference type="GO" id="GO:0005524">
    <property type="term" value="F:ATP binding"/>
    <property type="evidence" value="ECO:0007669"/>
    <property type="project" value="UniProtKB-KW"/>
</dbReference>
<dbReference type="GO" id="GO:0018858">
    <property type="term" value="F:benzoate-CoA ligase activity"/>
    <property type="evidence" value="ECO:0000314"/>
    <property type="project" value="UniProtKB"/>
</dbReference>
<dbReference type="GO" id="GO:0016405">
    <property type="term" value="F:CoA-ligase activity"/>
    <property type="evidence" value="ECO:0000304"/>
    <property type="project" value="Reactome"/>
</dbReference>
<dbReference type="GO" id="GO:0102391">
    <property type="term" value="F:decanoate-CoA ligase activity"/>
    <property type="evidence" value="ECO:0000314"/>
    <property type="project" value="UniProtKB"/>
</dbReference>
<dbReference type="GO" id="GO:0015645">
    <property type="term" value="F:fatty acid ligase activity"/>
    <property type="evidence" value="ECO:0000318"/>
    <property type="project" value="GO_Central"/>
</dbReference>
<dbReference type="GO" id="GO:0004321">
    <property type="term" value="F:fatty-acyl-CoA synthase activity"/>
    <property type="evidence" value="ECO:0000318"/>
    <property type="project" value="GO_Central"/>
</dbReference>
<dbReference type="GO" id="GO:0005525">
    <property type="term" value="F:GTP binding"/>
    <property type="evidence" value="ECO:0007669"/>
    <property type="project" value="UniProtKB-KW"/>
</dbReference>
<dbReference type="GO" id="GO:0004467">
    <property type="term" value="F:long-chain fatty acid-CoA ligase activity"/>
    <property type="evidence" value="ECO:0000314"/>
    <property type="project" value="UniProtKB"/>
</dbReference>
<dbReference type="GO" id="GO:0031956">
    <property type="term" value="F:medium-chain fatty acid-CoA ligase activity"/>
    <property type="evidence" value="ECO:0000314"/>
    <property type="project" value="UniProtKB"/>
</dbReference>
<dbReference type="GO" id="GO:0046872">
    <property type="term" value="F:metal ion binding"/>
    <property type="evidence" value="ECO:0007669"/>
    <property type="project" value="UniProtKB-KW"/>
</dbReference>
<dbReference type="GO" id="GO:0006637">
    <property type="term" value="P:acyl-CoA metabolic process"/>
    <property type="evidence" value="ECO:0000318"/>
    <property type="project" value="GO_Central"/>
</dbReference>
<dbReference type="GO" id="GO:0018874">
    <property type="term" value="P:benzoate metabolic process"/>
    <property type="evidence" value="ECO:0000303"/>
    <property type="project" value="UniProtKB"/>
</dbReference>
<dbReference type="GO" id="GO:0019605">
    <property type="term" value="P:butyrate metabolic process"/>
    <property type="evidence" value="ECO:0000303"/>
    <property type="project" value="UniProtKB"/>
</dbReference>
<dbReference type="GO" id="GO:0042632">
    <property type="term" value="P:cholesterol homeostasis"/>
    <property type="evidence" value="ECO:0000303"/>
    <property type="project" value="BHF-UCL"/>
</dbReference>
<dbReference type="GO" id="GO:0015980">
    <property type="term" value="P:energy derivation by oxidation of organic compounds"/>
    <property type="evidence" value="ECO:0000303"/>
    <property type="project" value="UniProtKB"/>
</dbReference>
<dbReference type="GO" id="GO:0006633">
    <property type="term" value="P:fatty acid biosynthetic process"/>
    <property type="evidence" value="ECO:0000318"/>
    <property type="project" value="GO_Central"/>
</dbReference>
<dbReference type="GO" id="GO:0019395">
    <property type="term" value="P:fatty acid oxidation"/>
    <property type="evidence" value="ECO:0000303"/>
    <property type="project" value="UniProtKB"/>
</dbReference>
<dbReference type="GO" id="GO:0006805">
    <property type="term" value="P:xenobiotic metabolic process"/>
    <property type="evidence" value="ECO:0000304"/>
    <property type="project" value="Reactome"/>
</dbReference>
<dbReference type="CDD" id="cd05928">
    <property type="entry name" value="MACS_euk"/>
    <property type="match status" value="1"/>
</dbReference>
<dbReference type="FunFam" id="3.40.50.12780:FF:000007">
    <property type="entry name" value="Acyl-coenzyme A synthetase ACSM2A, mitochondrial"/>
    <property type="match status" value="1"/>
</dbReference>
<dbReference type="FunFam" id="3.30.300.30:FF:000005">
    <property type="entry name" value="Acyl-coenzyme A synthetase ACSM5, mitochondrial"/>
    <property type="match status" value="1"/>
</dbReference>
<dbReference type="Gene3D" id="3.30.300.30">
    <property type="match status" value="1"/>
</dbReference>
<dbReference type="Gene3D" id="3.40.50.12780">
    <property type="entry name" value="N-terminal domain of ligase-like"/>
    <property type="match status" value="1"/>
</dbReference>
<dbReference type="InterPro" id="IPR025110">
    <property type="entry name" value="AMP-bd_C"/>
</dbReference>
<dbReference type="InterPro" id="IPR045851">
    <property type="entry name" value="AMP-bd_C_sf"/>
</dbReference>
<dbReference type="InterPro" id="IPR020845">
    <property type="entry name" value="AMP-binding_CS"/>
</dbReference>
<dbReference type="InterPro" id="IPR000873">
    <property type="entry name" value="AMP-dep_synth/lig_dom"/>
</dbReference>
<dbReference type="InterPro" id="IPR042099">
    <property type="entry name" value="ANL_N_sf"/>
</dbReference>
<dbReference type="InterPro" id="IPR051087">
    <property type="entry name" value="Mitochondrial_ACSM"/>
</dbReference>
<dbReference type="PANTHER" id="PTHR43605">
    <property type="entry name" value="ACYL-COENZYME A SYNTHETASE"/>
    <property type="match status" value="1"/>
</dbReference>
<dbReference type="PANTHER" id="PTHR43605:SF5">
    <property type="entry name" value="ACYL-COENZYME A SYNTHETASE ACSM1, MITOCHONDRIAL"/>
    <property type="match status" value="1"/>
</dbReference>
<dbReference type="Pfam" id="PF00501">
    <property type="entry name" value="AMP-binding"/>
    <property type="match status" value="1"/>
</dbReference>
<dbReference type="Pfam" id="PF13193">
    <property type="entry name" value="AMP-binding_C"/>
    <property type="match status" value="1"/>
</dbReference>
<dbReference type="SUPFAM" id="SSF56801">
    <property type="entry name" value="Acetyl-CoA synthetase-like"/>
    <property type="match status" value="1"/>
</dbReference>
<dbReference type="PROSITE" id="PS00455">
    <property type="entry name" value="AMP_BINDING"/>
    <property type="match status" value="1"/>
</dbReference>
<keyword id="KW-0007">Acetylation</keyword>
<keyword id="KW-0025">Alternative splicing</keyword>
<keyword id="KW-0067">ATP-binding</keyword>
<keyword id="KW-0276">Fatty acid metabolism</keyword>
<keyword id="KW-0342">GTP-binding</keyword>
<keyword id="KW-0436">Ligase</keyword>
<keyword id="KW-0443">Lipid metabolism</keyword>
<keyword id="KW-0460">Magnesium</keyword>
<keyword id="KW-0479">Metal-binding</keyword>
<keyword id="KW-0496">Mitochondrion</keyword>
<keyword id="KW-0547">Nucleotide-binding</keyword>
<keyword id="KW-1267">Proteomics identification</keyword>
<keyword id="KW-1185">Reference proteome</keyword>
<keyword id="KW-0809">Transit peptide</keyword>
<accession>Q08AH1</accession>
<accession>Q08AH2</accession>
<accession>Q96A20</accession>
<name>ACSM1_HUMAN</name>
<gene>
    <name type="primary">ACSM1</name>
    <name type="synonym">BUCS1</name>
    <name evidence="3" type="synonym">LAE</name>
    <name type="synonym">MACS1</name>
</gene>
<feature type="transit peptide" description="Mitochondrion" evidence="1">
    <location>
        <begin position="1"/>
        <end position="31"/>
    </location>
</feature>
<feature type="chain" id="PRO_0000306091" description="Acyl-coenzyme A synthetase ACSM1, mitochondrial">
    <location>
        <begin position="32"/>
        <end position="577"/>
    </location>
</feature>
<feature type="binding site" evidence="1">
    <location>
        <begin position="226"/>
        <end position="234"/>
    </location>
    <ligand>
        <name>ATP</name>
        <dbReference type="ChEBI" id="CHEBI:30616"/>
    </ligand>
</feature>
<feature type="binding site" evidence="1">
    <location>
        <position position="452"/>
    </location>
    <ligand>
        <name>ATP</name>
        <dbReference type="ChEBI" id="CHEBI:30616"/>
    </ligand>
</feature>
<feature type="binding site" evidence="1">
    <location>
        <position position="467"/>
    </location>
    <ligand>
        <name>ATP</name>
        <dbReference type="ChEBI" id="CHEBI:30616"/>
    </ligand>
</feature>
<feature type="binding site" evidence="1">
    <location>
        <position position="563"/>
    </location>
    <ligand>
        <name>ATP</name>
        <dbReference type="ChEBI" id="CHEBI:30616"/>
    </ligand>
</feature>
<feature type="modified residue" description="N6-succinyllysine" evidence="2">
    <location>
        <position position="85"/>
    </location>
</feature>
<feature type="modified residue" description="N6-acetyllysine; alternate" evidence="2">
    <location>
        <position position="146"/>
    </location>
</feature>
<feature type="modified residue" description="N6-succinyllysine; alternate" evidence="2">
    <location>
        <position position="146"/>
    </location>
</feature>
<feature type="modified residue" description="N6-succinyllysine" evidence="2">
    <location>
        <position position="183"/>
    </location>
</feature>
<feature type="modified residue" description="N6-acetyllysine; alternate" evidence="2">
    <location>
        <position position="204"/>
    </location>
</feature>
<feature type="modified residue" description="N6-succinyllysine; alternate" evidence="2">
    <location>
        <position position="204"/>
    </location>
</feature>
<feature type="modified residue" description="N6-acetyllysine" evidence="2">
    <location>
        <position position="214"/>
    </location>
</feature>
<feature type="modified residue" description="N6-succinyllysine" evidence="2">
    <location>
        <position position="237"/>
    </location>
</feature>
<feature type="modified residue" description="N6-acetyllysine; alternate" evidence="2">
    <location>
        <position position="356"/>
    </location>
</feature>
<feature type="modified residue" description="N6-succinyllysine; alternate" evidence="2">
    <location>
        <position position="356"/>
    </location>
</feature>
<feature type="modified residue" description="N6-acetyllysine; alternate" evidence="2">
    <location>
        <position position="391"/>
    </location>
</feature>
<feature type="modified residue" description="N6-succinyllysine; alternate" evidence="2">
    <location>
        <position position="391"/>
    </location>
</feature>
<feature type="modified residue" description="N6-acetyllysine" evidence="2">
    <location>
        <position position="531"/>
    </location>
</feature>
<feature type="modified residue" description="N6-acetyllysine; alternate" evidence="2">
    <location>
        <position position="538"/>
    </location>
</feature>
<feature type="modified residue" description="N6-succinyllysine; alternate" evidence="2">
    <location>
        <position position="538"/>
    </location>
</feature>
<feature type="modified residue" description="N6-acetyllysine" evidence="2">
    <location>
        <position position="549"/>
    </location>
</feature>
<feature type="splice variant" id="VSP_028391" description="In isoform 2." evidence="6">
    <location>
        <begin position="205"/>
        <end position="577"/>
    </location>
</feature>
<feature type="sequence variant" id="VAR_048238" description="In dbSNP:rs16970511.">
    <original>I</original>
    <variation>M</variation>
    <location>
        <position position="272"/>
    </location>
</feature>
<feature type="sequence variant" id="VAR_035245" description="In dbSNP:rs8056709.">
    <original>I</original>
    <variation>V</variation>
    <location>
        <position position="479"/>
    </location>
</feature>
<feature type="sequence variant" id="VAR_035246" description="In dbSNP:rs16970453.">
    <original>I</original>
    <variation>T</variation>
    <location>
        <position position="515"/>
    </location>
</feature>
<feature type="sequence conflict" description="In Ref. 1; BAB64535/BAB68363." evidence="7" ref="1">
    <original>K</original>
    <variation>N</variation>
    <location>
        <position position="549"/>
    </location>
</feature>
<proteinExistence type="evidence at protein level"/>
<comment type="function">
    <text evidence="3 4">Catalyzes the activation of fatty acids by CoA to produce an acyl-CoA, the first step in fatty acid metabolism (PubMed:10434065). Capable of activating medium-chain fatty acids (e.g. butyric (C4) to decanoic (C10) acids), and certain carboxylate-containing xenobiotics, e.g. benzoate (PubMed:10434065). Also catalyzes the activation of lipoate to lipoyl-nucleoside monophosphate (By similarity). Activates lipoate with GTP at a 1000-fold higher rate than with ATP and activates both (R)- and (S)-lipoate to the respective lipoyl-GMP, with a preference for (R)-lipoate (By similarity).</text>
</comment>
<comment type="catalytic activity">
    <reaction evidence="4">
        <text>a medium-chain fatty acid + ATP + CoA = a medium-chain fatty acyl-CoA + AMP + diphosphate</text>
        <dbReference type="Rhea" id="RHEA:48340"/>
        <dbReference type="ChEBI" id="CHEBI:30616"/>
        <dbReference type="ChEBI" id="CHEBI:33019"/>
        <dbReference type="ChEBI" id="CHEBI:57287"/>
        <dbReference type="ChEBI" id="CHEBI:59558"/>
        <dbReference type="ChEBI" id="CHEBI:90546"/>
        <dbReference type="ChEBI" id="CHEBI:456215"/>
        <dbReference type="EC" id="6.2.1.2"/>
    </reaction>
    <physiologicalReaction direction="left-to-right" evidence="8">
        <dbReference type="Rhea" id="RHEA:48341"/>
    </physiologicalReaction>
</comment>
<comment type="catalytic activity">
    <reaction evidence="4">
        <text>benzoate + ATP + CoA = benzoyl-CoA + AMP + diphosphate</text>
        <dbReference type="Rhea" id="RHEA:10132"/>
        <dbReference type="ChEBI" id="CHEBI:16150"/>
        <dbReference type="ChEBI" id="CHEBI:30616"/>
        <dbReference type="ChEBI" id="CHEBI:33019"/>
        <dbReference type="ChEBI" id="CHEBI:57287"/>
        <dbReference type="ChEBI" id="CHEBI:57369"/>
        <dbReference type="ChEBI" id="CHEBI:456215"/>
        <dbReference type="EC" id="6.2.1.25"/>
    </reaction>
    <physiologicalReaction direction="left-to-right" evidence="4">
        <dbReference type="Rhea" id="RHEA:10133"/>
    </physiologicalReaction>
</comment>
<comment type="catalytic activity">
    <reaction evidence="3">
        <text>(R)-lipoate + GTP + H(+) = (R)-lipoyl-GMP + diphosphate</text>
        <dbReference type="Rhea" id="RHEA:46700"/>
        <dbReference type="ChEBI" id="CHEBI:15378"/>
        <dbReference type="ChEBI" id="CHEBI:33019"/>
        <dbReference type="ChEBI" id="CHEBI:37565"/>
        <dbReference type="ChEBI" id="CHEBI:83088"/>
        <dbReference type="ChEBI" id="CHEBI:86460"/>
    </reaction>
    <physiologicalReaction direction="left-to-right" evidence="3">
        <dbReference type="Rhea" id="RHEA:46701"/>
    </physiologicalReaction>
</comment>
<comment type="catalytic activity">
    <reaction evidence="2">
        <text>octanoate + ATP + CoA = octanoyl-CoA + AMP + diphosphate</text>
        <dbReference type="Rhea" id="RHEA:33631"/>
        <dbReference type="ChEBI" id="CHEBI:25646"/>
        <dbReference type="ChEBI" id="CHEBI:30616"/>
        <dbReference type="ChEBI" id="CHEBI:33019"/>
        <dbReference type="ChEBI" id="CHEBI:57287"/>
        <dbReference type="ChEBI" id="CHEBI:57386"/>
        <dbReference type="ChEBI" id="CHEBI:456215"/>
    </reaction>
    <physiologicalReaction direction="left-to-right" evidence="2">
        <dbReference type="Rhea" id="RHEA:33632"/>
    </physiologicalReaction>
</comment>
<comment type="catalytic activity">
    <reaction evidence="4">
        <text>decanoate + ATP + CoA = decanoyl-CoA + AMP + diphosphate</text>
        <dbReference type="Rhea" id="RHEA:33627"/>
        <dbReference type="ChEBI" id="CHEBI:27689"/>
        <dbReference type="ChEBI" id="CHEBI:30616"/>
        <dbReference type="ChEBI" id="CHEBI:33019"/>
        <dbReference type="ChEBI" id="CHEBI:57287"/>
        <dbReference type="ChEBI" id="CHEBI:61430"/>
        <dbReference type="ChEBI" id="CHEBI:456215"/>
    </reaction>
    <physiologicalReaction direction="left-to-right" evidence="8">
        <dbReference type="Rhea" id="RHEA:33628"/>
    </physiologicalReaction>
</comment>
<comment type="catalytic activity">
    <reaction evidence="2">
        <text>dodecanoate + ATP + CoA = dodecanoyl-CoA + AMP + diphosphate</text>
        <dbReference type="Rhea" id="RHEA:33623"/>
        <dbReference type="ChEBI" id="CHEBI:18262"/>
        <dbReference type="ChEBI" id="CHEBI:30616"/>
        <dbReference type="ChEBI" id="CHEBI:33019"/>
        <dbReference type="ChEBI" id="CHEBI:57287"/>
        <dbReference type="ChEBI" id="CHEBI:57375"/>
        <dbReference type="ChEBI" id="CHEBI:456215"/>
    </reaction>
    <physiologicalReaction direction="left-to-right" evidence="2">
        <dbReference type="Rhea" id="RHEA:33624"/>
    </physiologicalReaction>
</comment>
<comment type="catalytic activity">
    <reaction evidence="2">
        <text>tetradecanoate + ATP + CoA = tetradecanoyl-CoA + AMP + diphosphate</text>
        <dbReference type="Rhea" id="RHEA:33619"/>
        <dbReference type="ChEBI" id="CHEBI:30616"/>
        <dbReference type="ChEBI" id="CHEBI:30807"/>
        <dbReference type="ChEBI" id="CHEBI:33019"/>
        <dbReference type="ChEBI" id="CHEBI:57287"/>
        <dbReference type="ChEBI" id="CHEBI:57385"/>
        <dbReference type="ChEBI" id="CHEBI:456215"/>
    </reaction>
    <physiologicalReaction direction="left-to-right" evidence="2">
        <dbReference type="Rhea" id="RHEA:33620"/>
    </physiologicalReaction>
</comment>
<comment type="catalytic activity">
    <reaction evidence="8">
        <text>hexanoate + ATP + CoA = hexanoyl-CoA + AMP + diphosphate</text>
        <dbReference type="Rhea" id="RHEA:43740"/>
        <dbReference type="ChEBI" id="CHEBI:17120"/>
        <dbReference type="ChEBI" id="CHEBI:30616"/>
        <dbReference type="ChEBI" id="CHEBI:33019"/>
        <dbReference type="ChEBI" id="CHEBI:57287"/>
        <dbReference type="ChEBI" id="CHEBI:62620"/>
        <dbReference type="ChEBI" id="CHEBI:456215"/>
    </reaction>
    <physiologicalReaction direction="left-to-right" evidence="8">
        <dbReference type="Rhea" id="RHEA:43741"/>
    </physiologicalReaction>
</comment>
<comment type="catalytic activity">
    <reaction evidence="8">
        <text>butanoate + ATP + CoA = butanoyl-CoA + AMP + diphosphate</text>
        <dbReference type="Rhea" id="RHEA:46172"/>
        <dbReference type="ChEBI" id="CHEBI:17968"/>
        <dbReference type="ChEBI" id="CHEBI:30616"/>
        <dbReference type="ChEBI" id="CHEBI:33019"/>
        <dbReference type="ChEBI" id="CHEBI:57287"/>
        <dbReference type="ChEBI" id="CHEBI:57371"/>
        <dbReference type="ChEBI" id="CHEBI:456215"/>
    </reaction>
    <physiologicalReaction direction="left-to-right" evidence="8">
        <dbReference type="Rhea" id="RHEA:46173"/>
    </physiologicalReaction>
</comment>
<comment type="catalytic activity">
    <reaction evidence="2">
        <text>hexadecanoate + ATP + CoA = hexadecanoyl-CoA + AMP + diphosphate</text>
        <dbReference type="Rhea" id="RHEA:30751"/>
        <dbReference type="ChEBI" id="CHEBI:7896"/>
        <dbReference type="ChEBI" id="CHEBI:30616"/>
        <dbReference type="ChEBI" id="CHEBI:33019"/>
        <dbReference type="ChEBI" id="CHEBI:57287"/>
        <dbReference type="ChEBI" id="CHEBI:57379"/>
        <dbReference type="ChEBI" id="CHEBI:456215"/>
    </reaction>
    <physiologicalReaction direction="left-to-right" evidence="2">
        <dbReference type="Rhea" id="RHEA:30752"/>
    </physiologicalReaction>
</comment>
<comment type="cofactor">
    <cofactor evidence="4">
        <name>Mg(2+)</name>
        <dbReference type="ChEBI" id="CHEBI:18420"/>
    </cofactor>
    <cofactor evidence="4">
        <name>Mn(2+)</name>
        <dbReference type="ChEBI" id="CHEBI:29035"/>
    </cofactor>
</comment>
<comment type="activity regulation">
    <text evidence="4">Activated by monovalent cations, such as potassium, rubidium or ammonium.</text>
</comment>
<comment type="biophysicochemical properties">
    <kinetics>
        <KM evidence="4">21 uM for benzoate</KM>
        <KM evidence="4">570 uM for butyrate</KM>
        <KM evidence="4">20 uM for decanoate</KM>
        <KM evidence="4">34 uM for hexanoate</KM>
        <KM evidence="4">24 uM for laurate</KM>
        <KM evidence="4">143 uM for phenylacetate</KM>
        <KM evidence="4">25 uM for salicylate</KM>
        <Vmax evidence="4">9.0 nmol/min/mg enzyme for benzoate</Vmax>
        <Vmax evidence="4">24.0 nmol/min/mg enzyme for butyrate</Vmax>
        <Vmax evidence="4">8.0 nmol/min/mg enzyme for decanoate</Vmax>
        <Vmax evidence="4">118.0 nmol/min/mg enzyme for hexanoate</Vmax>
        <Vmax evidence="4">0.15 nmol/min/mg enzyme for laurate</Vmax>
        <Vmax evidence="4">2.0 nmol/min/mg enzyme for phenylacetate</Vmax>
    </kinetics>
    <phDependence>
        <text evidence="4">Optimum pH is 8.8.</text>
    </phDependence>
</comment>
<comment type="subunit">
    <text evidence="3">Monomer.</text>
</comment>
<comment type="interaction">
    <interactant intactId="EBI-2818055">
        <id>Q08AH1</id>
    </interactant>
    <interactant intactId="EBI-11522780">
        <id>Q96DZ9-2</id>
        <label>CMTM5</label>
    </interactant>
    <organismsDiffer>false</organismsDiffer>
    <experiments>3</experiments>
</comment>
<comment type="interaction">
    <interactant intactId="EBI-2818055">
        <id>Q08AH1</id>
    </interactant>
    <interactant intactId="EBI-5650739">
        <id>P43356</id>
        <label>MAGEA2B</label>
    </interactant>
    <organismsDiffer>false</organismsDiffer>
    <experiments>3</experiments>
</comment>
<comment type="interaction">
    <interactant intactId="EBI-2818055">
        <id>Q08AH1</id>
    </interactant>
    <interactant intactId="EBI-11522433">
        <id>Q5JR59-3</id>
        <label>MTUS2</label>
    </interactant>
    <organismsDiffer>false</organismsDiffer>
    <experiments>3</experiments>
</comment>
<comment type="interaction">
    <interactant intactId="EBI-2818055">
        <id>Q08AH1</id>
    </interactant>
    <interactant intactId="EBI-1051317">
        <id>Q9H4L5</id>
        <label>OSBPL3</label>
    </interactant>
    <organismsDiffer>false</organismsDiffer>
    <experiments>3</experiments>
</comment>
<comment type="interaction">
    <interactant intactId="EBI-2818055">
        <id>Q08AH1</id>
    </interactant>
    <interactant intactId="EBI-741137">
        <id>O43663</id>
        <label>PRC1</label>
    </interactant>
    <organismsDiffer>false</organismsDiffer>
    <experiments>2</experiments>
</comment>
<comment type="subcellular location">
    <subcellularLocation>
        <location evidence="2">Mitochondrion matrix</location>
    </subcellularLocation>
    <subcellularLocation>
        <location evidence="2">Mitochondrion</location>
    </subcellularLocation>
</comment>
<comment type="alternative products">
    <event type="alternative splicing"/>
    <isoform>
        <id>Q08AH1-1</id>
        <name>1</name>
        <sequence type="displayed"/>
    </isoform>
    <isoform>
        <id>Q08AH1-2</id>
        <name>2</name>
        <sequence type="described" ref="VSP_028391"/>
    </isoform>
</comment>
<comment type="similarity">
    <text evidence="7">Belongs to the ATP-dependent AMP-binding enzyme family.</text>
</comment>
<protein>
    <recommendedName>
        <fullName>Acyl-coenzyme A synthetase ACSM1, mitochondrial</fullName>
        <ecNumber evidence="4">6.2.1.2</ecNumber>
    </recommendedName>
    <alternativeName>
        <fullName>Acyl-CoA synthetase medium-chain family member 1</fullName>
    </alternativeName>
    <alternativeName>
        <fullName>Benzoate--CoA ligase</fullName>
        <ecNumber evidence="4">6.2.1.25</ecNumber>
    </alternativeName>
    <alternativeName>
        <fullName>Butyrate--CoA ligase 1</fullName>
    </alternativeName>
    <alternativeName>
        <fullName>Butyryl-coenzyme A synthetase 1</fullName>
    </alternativeName>
    <alternativeName>
        <fullName evidence="3">Lipoate-activating enzyme</fullName>
    </alternativeName>
    <alternativeName>
        <fullName>Middle-chain acyl-CoA synthetase 1</fullName>
    </alternativeName>
    <alternativeName>
        <fullName evidence="5">Xenobiotic/medium-chain fatty acid-CoA ligase HXM-B</fullName>
    </alternativeName>
</protein>
<organism>
    <name type="scientific">Homo sapiens</name>
    <name type="common">Human</name>
    <dbReference type="NCBI Taxonomy" id="9606"/>
    <lineage>
        <taxon>Eukaryota</taxon>
        <taxon>Metazoa</taxon>
        <taxon>Chordata</taxon>
        <taxon>Craniata</taxon>
        <taxon>Vertebrata</taxon>
        <taxon>Euteleostomi</taxon>
        <taxon>Mammalia</taxon>
        <taxon>Eutheria</taxon>
        <taxon>Euarchontoglires</taxon>
        <taxon>Primates</taxon>
        <taxon>Haplorrhini</taxon>
        <taxon>Catarrhini</taxon>
        <taxon>Hominidae</taxon>
        <taxon>Homo</taxon>
    </lineage>
</organism>